<sequence>MWELVCLLLLILAYLFWPKPKTSDAKFPRSLPFLPLVGSLPFLPRHGHMHVNFFKLQEKYGPIYSLRLGTIPTVIIGQYQLAREVLIKKGKEFSGRPQMVTLGLLSNQGKGIAFADSDDAWQLHRKLALSSFALFRDGDQRLETIICQEASSLCDLLLTHNEESVDLSQPIFMSVTNIICAICFSTSYENRDPILTTIQTFTEGILNCLDNENLVDIFPWLTIFPNKTLEKIKRHVKVRDEVLIDMLEKCKEKFNNDSISNLTDILIQAKMNADNNNTTDHQGSFSDSHILSTVGDFFGAGIETTTSVLCWIVAFLLHNPEVKKKIQKEIDQNIGFSRTPTFNDRNHLLMLEATIREVLRIRPVAPMLIPHKANIDSSIGEFTIPKDTHVVINLWALHHNEKEWDQPDRFMPERFLDATGSHLITPSLSYLPFGAGPRACIGEVLARQVLFLYVACLLQRFDLDVPDGAPMPCLKGDPKVVFLIDPFKVKVTVRQAWKDAQAEVGTWRP</sequence>
<protein>
    <recommendedName>
        <fullName>Steroid 17-alpha-hydroxylase/17,20 lyase</fullName>
        <ecNumber evidence="2">1.14.14.19</ecNumber>
    </recommendedName>
    <alternativeName>
        <fullName>17-alpha-hydroxyprogesterone aldolase</fullName>
        <ecNumber evidence="2">1.14.14.32</ecNumber>
    </alternativeName>
    <alternativeName>
        <fullName>CYPXVII</fullName>
    </alternativeName>
    <alternativeName>
        <fullName>Cytochrome P450 17A1</fullName>
    </alternativeName>
    <alternativeName>
        <fullName>Cytochrome P450-C17</fullName>
        <shortName>Cytochrome P450c17</shortName>
    </alternativeName>
    <alternativeName>
        <fullName>Steroid 17-alpha-monooxygenase</fullName>
    </alternativeName>
</protein>
<reference key="1">
    <citation type="submission" date="2001-08" db="EMBL/GenBank/DDBJ databases">
        <title>Genomic sequence and adrenal expression of Cyp17 during reproductive development in Peromyscus leucopus.</title>
        <authorList>
            <person name="Gleason K.K."/>
            <person name="Hurst F.P."/>
            <person name="Powers M.A."/>
            <person name="Riddle S.W."/>
            <person name="Seashols S."/>
            <person name="Bradley E.L."/>
        </authorList>
    </citation>
    <scope>NUCLEOTIDE SEQUENCE [GENOMIC DNA]</scope>
</reference>
<feature type="chain" id="PRO_0000051939" description="Steroid 17-alpha-hydroxylase/17,20 lyase">
    <location>
        <begin position="1"/>
        <end position="509"/>
    </location>
</feature>
<feature type="binding site" description="axial binding residue" evidence="1">
    <location>
        <position position="440"/>
    </location>
    <ligand>
        <name>heme</name>
        <dbReference type="ChEBI" id="CHEBI:30413"/>
    </ligand>
    <ligandPart>
        <name>Fe</name>
        <dbReference type="ChEBI" id="CHEBI:18248"/>
    </ligandPart>
</feature>
<gene>
    <name type="primary">Cyp17a1</name>
    <name type="synonym">Cyp17</name>
</gene>
<comment type="function">
    <text evidence="2">A cytochrome P450 monooxygenase involved in corticoid and androgen biosynthesis. Catalyzes 17-alpha hydroxylation of C21 steroids, which is common for both pathways. A second oxidative step, required only for androgen synthesis, involves an acyl-carbon cleavage. The 17-alpha hydroxy intermediates, as part of adrenal glucocorticoids biosynthesis pathway, are precursors of cortisol. Hydroxylates steroid hormones, pregnenolone and progesterone to form 17-alpha hydroxy metabolites, followed by the cleavage of the C17-C20 bond to form C19 steroids, dehydroepiandrosterone (DHEA) and androstenedione. Has 16-alpha hydroxylase activity. Catalyzes 16-alpha hydroxylation of 17-alpha hydroxy pregnenolone, followed by the cleavage of the C17-C20 bond to form 16-alpha-hydroxy DHEA. Also 16-alpha hydroxylates androgens, relevant for estriol synthesis. Mechanistically, uses molecular oxygen inserting one oxygen atom into a substrate, and reducing the second into a water molecule, with two electrons provided by NADPH via cytochrome P450 reductase (CPR; NADPH-ferrihemoprotein reductase).</text>
</comment>
<comment type="catalytic activity">
    <reaction evidence="2">
        <text>a C21-steroid + reduced [NADPH--hemoprotein reductase] + O2 = a 17alpha-hydroxy-C21-steroid + oxidized [NADPH--hemoprotein reductase] + H2O + H(+)</text>
        <dbReference type="Rhea" id="RHEA:65760"/>
        <dbReference type="Rhea" id="RHEA-COMP:11964"/>
        <dbReference type="Rhea" id="RHEA-COMP:11965"/>
        <dbReference type="ChEBI" id="CHEBI:15377"/>
        <dbReference type="ChEBI" id="CHEBI:15378"/>
        <dbReference type="ChEBI" id="CHEBI:15379"/>
        <dbReference type="ChEBI" id="CHEBI:57618"/>
        <dbReference type="ChEBI" id="CHEBI:58210"/>
        <dbReference type="ChEBI" id="CHEBI:61313"/>
        <dbReference type="ChEBI" id="CHEBI:138141"/>
        <dbReference type="EC" id="1.14.14.19"/>
    </reaction>
    <physiologicalReaction direction="left-to-right" evidence="2">
        <dbReference type="Rhea" id="RHEA:65761"/>
    </physiologicalReaction>
</comment>
<comment type="catalytic activity">
    <reaction evidence="2">
        <text>progesterone + reduced [NADPH--hemoprotein reductase] + O2 = 17alpha-hydroxyprogesterone + oxidized [NADPH--hemoprotein reductase] + H2O + H(+)</text>
        <dbReference type="Rhea" id="RHEA:46308"/>
        <dbReference type="Rhea" id="RHEA-COMP:11964"/>
        <dbReference type="Rhea" id="RHEA-COMP:11965"/>
        <dbReference type="ChEBI" id="CHEBI:15377"/>
        <dbReference type="ChEBI" id="CHEBI:15378"/>
        <dbReference type="ChEBI" id="CHEBI:15379"/>
        <dbReference type="ChEBI" id="CHEBI:17026"/>
        <dbReference type="ChEBI" id="CHEBI:17252"/>
        <dbReference type="ChEBI" id="CHEBI:57618"/>
        <dbReference type="ChEBI" id="CHEBI:58210"/>
        <dbReference type="EC" id="1.14.14.19"/>
    </reaction>
    <physiologicalReaction direction="left-to-right" evidence="2">
        <dbReference type="Rhea" id="RHEA:46309"/>
    </physiologicalReaction>
</comment>
<comment type="catalytic activity">
    <reaction evidence="2">
        <text>pregnenolone + reduced [NADPH--hemoprotein reductase] + O2 = 17alpha-hydroxypregnenolone + oxidized [NADPH--hemoprotein reductase] + H2O + H(+)</text>
        <dbReference type="Rhea" id="RHEA:50236"/>
        <dbReference type="Rhea" id="RHEA-COMP:11964"/>
        <dbReference type="Rhea" id="RHEA-COMP:11965"/>
        <dbReference type="ChEBI" id="CHEBI:15377"/>
        <dbReference type="ChEBI" id="CHEBI:15378"/>
        <dbReference type="ChEBI" id="CHEBI:15379"/>
        <dbReference type="ChEBI" id="CHEBI:16581"/>
        <dbReference type="ChEBI" id="CHEBI:28750"/>
        <dbReference type="ChEBI" id="CHEBI:57618"/>
        <dbReference type="ChEBI" id="CHEBI:58210"/>
        <dbReference type="EC" id="1.14.14.19"/>
    </reaction>
    <physiologicalReaction direction="left-to-right" evidence="2">
        <dbReference type="Rhea" id="RHEA:50237"/>
    </physiologicalReaction>
</comment>
<comment type="catalytic activity">
    <reaction evidence="2">
        <text>17alpha-hydroxyprogesterone + reduced [NADPH--hemoprotein reductase] + O2 = androst-4-ene-3,17-dione + acetate + oxidized [NADPH--hemoprotein reductase] + H2O + 2 H(+)</text>
        <dbReference type="Rhea" id="RHEA:14753"/>
        <dbReference type="Rhea" id="RHEA-COMP:11964"/>
        <dbReference type="Rhea" id="RHEA-COMP:11965"/>
        <dbReference type="ChEBI" id="CHEBI:15377"/>
        <dbReference type="ChEBI" id="CHEBI:15378"/>
        <dbReference type="ChEBI" id="CHEBI:15379"/>
        <dbReference type="ChEBI" id="CHEBI:16422"/>
        <dbReference type="ChEBI" id="CHEBI:17252"/>
        <dbReference type="ChEBI" id="CHEBI:30089"/>
        <dbReference type="ChEBI" id="CHEBI:57618"/>
        <dbReference type="ChEBI" id="CHEBI:58210"/>
        <dbReference type="EC" id="1.14.14.32"/>
    </reaction>
    <physiologicalReaction direction="left-to-right" evidence="2">
        <dbReference type="Rhea" id="RHEA:14754"/>
    </physiologicalReaction>
</comment>
<comment type="catalytic activity">
    <reaction evidence="2">
        <text>17alpha-hydroxyprogesterone + reduced [NADPH--hemoprotein reductase] + O2 = 16alpha,17alpha-dihydroxyprogesterone + oxidized [NADPH--hemoprotein reductase] + H2O + H(+)</text>
        <dbReference type="Rhea" id="RHEA:53216"/>
        <dbReference type="Rhea" id="RHEA-COMP:11964"/>
        <dbReference type="Rhea" id="RHEA-COMP:11965"/>
        <dbReference type="ChEBI" id="CHEBI:763"/>
        <dbReference type="ChEBI" id="CHEBI:15377"/>
        <dbReference type="ChEBI" id="CHEBI:15378"/>
        <dbReference type="ChEBI" id="CHEBI:15379"/>
        <dbReference type="ChEBI" id="CHEBI:17252"/>
        <dbReference type="ChEBI" id="CHEBI:57618"/>
        <dbReference type="ChEBI" id="CHEBI:58210"/>
    </reaction>
    <physiologicalReaction direction="left-to-right" evidence="2">
        <dbReference type="Rhea" id="RHEA:53217"/>
    </physiologicalReaction>
</comment>
<comment type="catalytic activity">
    <reaction evidence="2">
        <text>16alpha,17alpha-dihydroxyprogesterone + reduced [NADPH--hemoprotein reductase] + O2 = 6beta,16alpha,17alpha-trihydroxyprogesterone + oxidized [NADPH--hemoprotein reductase] + H2O + H(+)</text>
        <dbReference type="Rhea" id="RHEA:53220"/>
        <dbReference type="Rhea" id="RHEA-COMP:11964"/>
        <dbReference type="Rhea" id="RHEA-COMP:11965"/>
        <dbReference type="ChEBI" id="CHEBI:763"/>
        <dbReference type="ChEBI" id="CHEBI:15377"/>
        <dbReference type="ChEBI" id="CHEBI:15378"/>
        <dbReference type="ChEBI" id="CHEBI:15379"/>
        <dbReference type="ChEBI" id="CHEBI:57618"/>
        <dbReference type="ChEBI" id="CHEBI:58210"/>
        <dbReference type="ChEBI" id="CHEBI:137046"/>
    </reaction>
    <physiologicalReaction direction="left-to-right" evidence="2">
        <dbReference type="Rhea" id="RHEA:53221"/>
    </physiologicalReaction>
</comment>
<comment type="catalytic activity">
    <reaction evidence="2">
        <text>17alpha-hydroxypregnenolone + reduced [NADPH--hemoprotein reductase] + O2 = 3beta-hydroxyandrost-5-en-17-one + acetate + oxidized [NADPH--hemoprotein reductase] + H2O + 2 H(+)</text>
        <dbReference type="Rhea" id="RHEA:50244"/>
        <dbReference type="Rhea" id="RHEA-COMP:11964"/>
        <dbReference type="Rhea" id="RHEA-COMP:11965"/>
        <dbReference type="ChEBI" id="CHEBI:15377"/>
        <dbReference type="ChEBI" id="CHEBI:15378"/>
        <dbReference type="ChEBI" id="CHEBI:15379"/>
        <dbReference type="ChEBI" id="CHEBI:28689"/>
        <dbReference type="ChEBI" id="CHEBI:28750"/>
        <dbReference type="ChEBI" id="CHEBI:30089"/>
        <dbReference type="ChEBI" id="CHEBI:57618"/>
        <dbReference type="ChEBI" id="CHEBI:58210"/>
        <dbReference type="EC" id="1.14.14.32"/>
    </reaction>
    <physiologicalReaction direction="left-to-right" evidence="2">
        <dbReference type="Rhea" id="RHEA:50245"/>
    </physiologicalReaction>
</comment>
<comment type="catalytic activity">
    <reaction evidence="2">
        <text>16alpha,17alpha-dihydroxypregnenolone + reduced [NADPH--hemoprotein reductase] + O2 = 3beta,16alpha-dihydroxy-androst-5-en-17-one + acetate + oxidized [NADPH--hemoprotein reductase] + H2O + 2 H(+)</text>
        <dbReference type="Rhea" id="RHEA:53224"/>
        <dbReference type="Rhea" id="RHEA-COMP:11964"/>
        <dbReference type="Rhea" id="RHEA-COMP:11965"/>
        <dbReference type="ChEBI" id="CHEBI:15377"/>
        <dbReference type="ChEBI" id="CHEBI:15378"/>
        <dbReference type="ChEBI" id="CHEBI:15379"/>
        <dbReference type="ChEBI" id="CHEBI:27771"/>
        <dbReference type="ChEBI" id="CHEBI:30089"/>
        <dbReference type="ChEBI" id="CHEBI:57618"/>
        <dbReference type="ChEBI" id="CHEBI:58210"/>
        <dbReference type="ChEBI" id="CHEBI:137049"/>
    </reaction>
    <physiologicalReaction direction="left-to-right" evidence="2">
        <dbReference type="Rhea" id="RHEA:53225"/>
    </physiologicalReaction>
</comment>
<comment type="catalytic activity">
    <reaction evidence="2">
        <text>3beta-hydroxyandrost-5-en-17-one + reduced [NADPH--hemoprotein reductase] + O2 = 3beta,16alpha-dihydroxy-androst-5-en-17-one + oxidized [NADPH--hemoprotein reductase] + H2O + H(+)</text>
        <dbReference type="Rhea" id="RHEA:47220"/>
        <dbReference type="Rhea" id="RHEA-COMP:11964"/>
        <dbReference type="Rhea" id="RHEA-COMP:11965"/>
        <dbReference type="ChEBI" id="CHEBI:15377"/>
        <dbReference type="ChEBI" id="CHEBI:15378"/>
        <dbReference type="ChEBI" id="CHEBI:15379"/>
        <dbReference type="ChEBI" id="CHEBI:27771"/>
        <dbReference type="ChEBI" id="CHEBI:28689"/>
        <dbReference type="ChEBI" id="CHEBI:57618"/>
        <dbReference type="ChEBI" id="CHEBI:58210"/>
    </reaction>
    <physiologicalReaction direction="left-to-right" evidence="2">
        <dbReference type="Rhea" id="RHEA:47221"/>
    </physiologicalReaction>
</comment>
<comment type="catalytic activity">
    <reaction evidence="2">
        <text>androst-4-ene-3,17-dione + reduced [NADPH--hemoprotein reductase] + O2 = 16alpha-hydroxyandrost-4-ene-3,17-dione + oxidized [NADPH--hemoprotein reductase] + H2O + H(+)</text>
        <dbReference type="Rhea" id="RHEA:53228"/>
        <dbReference type="Rhea" id="RHEA-COMP:11964"/>
        <dbReference type="Rhea" id="RHEA-COMP:11965"/>
        <dbReference type="ChEBI" id="CHEBI:15377"/>
        <dbReference type="ChEBI" id="CHEBI:15378"/>
        <dbReference type="ChEBI" id="CHEBI:15379"/>
        <dbReference type="ChEBI" id="CHEBI:16422"/>
        <dbReference type="ChEBI" id="CHEBI:27582"/>
        <dbReference type="ChEBI" id="CHEBI:57618"/>
        <dbReference type="ChEBI" id="CHEBI:58210"/>
    </reaction>
    <physiologicalReaction direction="left-to-right" evidence="2">
        <dbReference type="Rhea" id="RHEA:53229"/>
    </physiologicalReaction>
</comment>
<comment type="cofactor">
    <cofactor evidence="2">
        <name>heme</name>
        <dbReference type="ChEBI" id="CHEBI:30413"/>
    </cofactor>
</comment>
<comment type="activity regulation">
    <text evidence="2">Regulated predominantly by intracellular cAMP levels. The 17,20-lyase activity is stimulated by cytochrome b5, which acts as an allosteric effector increasing the Vmax of the lyase activity.</text>
</comment>
<comment type="pathway">
    <text evidence="2">Steroid hormone biosynthesis.</text>
</comment>
<comment type="pathway">
    <text evidence="2">Steroid biosynthesis; glucocorticoid biosynthesis.</text>
</comment>
<comment type="subcellular location">
    <subcellularLocation>
        <location evidence="2">Endoplasmic reticulum membrane</location>
    </subcellularLocation>
    <subcellularLocation>
        <location evidence="2">Microsome membrane</location>
    </subcellularLocation>
</comment>
<comment type="similarity">
    <text evidence="3">Belongs to the cytochrome P450 family.</text>
</comment>
<name>CP17A_PERLE</name>
<dbReference type="EC" id="1.14.14.19" evidence="2"/>
<dbReference type="EC" id="1.14.14.32" evidence="2"/>
<dbReference type="EMBL" id="AY054747">
    <property type="protein sequence ID" value="AAL12229.1"/>
    <property type="molecule type" value="Genomic_DNA"/>
</dbReference>
<dbReference type="SMR" id="Q91Z85"/>
<dbReference type="UniPathway" id="UPA00788"/>
<dbReference type="GO" id="GO:0005789">
    <property type="term" value="C:endoplasmic reticulum membrane"/>
    <property type="evidence" value="ECO:0007669"/>
    <property type="project" value="UniProtKB-SubCell"/>
</dbReference>
<dbReference type="GO" id="GO:0020037">
    <property type="term" value="F:heme binding"/>
    <property type="evidence" value="ECO:0000250"/>
    <property type="project" value="UniProtKB"/>
</dbReference>
<dbReference type="GO" id="GO:0005506">
    <property type="term" value="F:iron ion binding"/>
    <property type="evidence" value="ECO:0007669"/>
    <property type="project" value="InterPro"/>
</dbReference>
<dbReference type="GO" id="GO:0016829">
    <property type="term" value="F:lyase activity"/>
    <property type="evidence" value="ECO:0007669"/>
    <property type="project" value="UniProtKB-KW"/>
</dbReference>
<dbReference type="GO" id="GO:0004508">
    <property type="term" value="F:steroid 17-alpha-monooxygenase activity"/>
    <property type="evidence" value="ECO:0000250"/>
    <property type="project" value="UniProtKB"/>
</dbReference>
<dbReference type="GO" id="GO:0006704">
    <property type="term" value="P:glucocorticoid biosynthetic process"/>
    <property type="evidence" value="ECO:0007669"/>
    <property type="project" value="UniProtKB-UniPathway"/>
</dbReference>
<dbReference type="GO" id="GO:0042446">
    <property type="term" value="P:hormone biosynthetic process"/>
    <property type="evidence" value="ECO:0000250"/>
    <property type="project" value="UniProtKB"/>
</dbReference>
<dbReference type="GO" id="GO:0042448">
    <property type="term" value="P:progesterone metabolic process"/>
    <property type="evidence" value="ECO:0000250"/>
    <property type="project" value="UniProtKB"/>
</dbReference>
<dbReference type="GO" id="GO:0008202">
    <property type="term" value="P:steroid metabolic process"/>
    <property type="evidence" value="ECO:0000250"/>
    <property type="project" value="UniProtKB"/>
</dbReference>
<dbReference type="CDD" id="cd20673">
    <property type="entry name" value="CYP17A1"/>
    <property type="match status" value="1"/>
</dbReference>
<dbReference type="FunFam" id="1.10.630.10:FF:000002">
    <property type="entry name" value="Cytochrome P450 1A1"/>
    <property type="match status" value="1"/>
</dbReference>
<dbReference type="Gene3D" id="1.10.630.10">
    <property type="entry name" value="Cytochrome P450"/>
    <property type="match status" value="1"/>
</dbReference>
<dbReference type="InterPro" id="IPR001128">
    <property type="entry name" value="Cyt_P450"/>
</dbReference>
<dbReference type="InterPro" id="IPR017972">
    <property type="entry name" value="Cyt_P450_CS"/>
</dbReference>
<dbReference type="InterPro" id="IPR002401">
    <property type="entry name" value="Cyt_P450_E_grp-I"/>
</dbReference>
<dbReference type="InterPro" id="IPR036396">
    <property type="entry name" value="Cyt_P450_sf"/>
</dbReference>
<dbReference type="PANTHER" id="PTHR24289">
    <property type="entry name" value="STEROID 17-ALPHA-HYDROXYLASE/17,20 LYASE"/>
    <property type="match status" value="1"/>
</dbReference>
<dbReference type="PANTHER" id="PTHR24289:SF13">
    <property type="entry name" value="STEROID 17-ALPHA-HYDROXYLASE_17,20 LYASE"/>
    <property type="match status" value="1"/>
</dbReference>
<dbReference type="Pfam" id="PF00067">
    <property type="entry name" value="p450"/>
    <property type="match status" value="1"/>
</dbReference>
<dbReference type="PRINTS" id="PR00463">
    <property type="entry name" value="EP450I"/>
</dbReference>
<dbReference type="PRINTS" id="PR00385">
    <property type="entry name" value="P450"/>
</dbReference>
<dbReference type="SUPFAM" id="SSF48264">
    <property type="entry name" value="Cytochrome P450"/>
    <property type="match status" value="1"/>
</dbReference>
<dbReference type="PROSITE" id="PS00086">
    <property type="entry name" value="CYTOCHROME_P450"/>
    <property type="match status" value="1"/>
</dbReference>
<keyword id="KW-0256">Endoplasmic reticulum</keyword>
<keyword id="KW-0349">Heme</keyword>
<keyword id="KW-0408">Iron</keyword>
<keyword id="KW-0443">Lipid metabolism</keyword>
<keyword id="KW-0456">Lyase</keyword>
<keyword id="KW-0472">Membrane</keyword>
<keyword id="KW-0479">Metal-binding</keyword>
<keyword id="KW-0492">Microsome</keyword>
<keyword id="KW-0503">Monooxygenase</keyword>
<keyword id="KW-0560">Oxidoreductase</keyword>
<keyword id="KW-0755">Steroidogenesis</keyword>
<evidence type="ECO:0000250" key="1"/>
<evidence type="ECO:0000250" key="2">
    <source>
        <dbReference type="UniProtKB" id="P05093"/>
    </source>
</evidence>
<evidence type="ECO:0000305" key="3"/>
<organism>
    <name type="scientific">Peromyscus leucopus</name>
    <name type="common">White-footed mouse</name>
    <dbReference type="NCBI Taxonomy" id="10041"/>
    <lineage>
        <taxon>Eukaryota</taxon>
        <taxon>Metazoa</taxon>
        <taxon>Chordata</taxon>
        <taxon>Craniata</taxon>
        <taxon>Vertebrata</taxon>
        <taxon>Euteleostomi</taxon>
        <taxon>Mammalia</taxon>
        <taxon>Eutheria</taxon>
        <taxon>Euarchontoglires</taxon>
        <taxon>Glires</taxon>
        <taxon>Rodentia</taxon>
        <taxon>Myomorpha</taxon>
        <taxon>Muroidea</taxon>
        <taxon>Cricetidae</taxon>
        <taxon>Neotominae</taxon>
        <taxon>Peromyscus</taxon>
    </lineage>
</organism>
<proteinExistence type="inferred from homology"/>
<accession>Q91Z85</accession>